<protein>
    <recommendedName>
        <fullName evidence="1">Bifunctional protein FolD</fullName>
    </recommendedName>
    <domain>
        <recommendedName>
            <fullName evidence="1">Methylenetetrahydrofolate dehydrogenase</fullName>
            <ecNumber evidence="1">1.5.1.5</ecNumber>
        </recommendedName>
    </domain>
    <domain>
        <recommendedName>
            <fullName evidence="1">Methenyltetrahydrofolate cyclohydrolase</fullName>
            <ecNumber evidence="1">3.5.4.9</ecNumber>
        </recommendedName>
    </domain>
</protein>
<proteinExistence type="inferred from homology"/>
<keyword id="KW-0028">Amino-acid biosynthesis</keyword>
<keyword id="KW-0368">Histidine biosynthesis</keyword>
<keyword id="KW-0378">Hydrolase</keyword>
<keyword id="KW-0486">Methionine biosynthesis</keyword>
<keyword id="KW-0511">Multifunctional enzyme</keyword>
<keyword id="KW-0521">NADP</keyword>
<keyword id="KW-0554">One-carbon metabolism</keyword>
<keyword id="KW-0560">Oxidoreductase</keyword>
<keyword id="KW-0658">Purine biosynthesis</keyword>
<keyword id="KW-1185">Reference proteome</keyword>
<accession>Q5QWH6</accession>
<sequence>MPAQIIDGKTIAATVRQAVKQQVKERIDSGLRAPGLAVVLVGSDAASEVYVGNKRRACEDVGFRSFDYDLPITTTQKELEKLIEELNDDDAVDGILVQLPLPAGLDATPILERIRPDKDVDGFHPFNIGRLSQRIPALRPCTPKGIMTLLEHTHVDLHGLNAVVVGASNIVGRPMSLELLLAGATTTVCHRFTKDLSDHVKRADIVVVAVGKAEFIPGEWIKPGAIVIDVGMNRLPDGRLTGDVEFSVAAERAGWITPVPGGVGPMTVASLIENTLQACVDYHDVR</sequence>
<reference key="1">
    <citation type="journal article" date="2004" name="Proc. Natl. Acad. Sci. U.S.A.">
        <title>Genome sequence of the deep-sea gamma-proteobacterium Idiomarina loihiensis reveals amino acid fermentation as a source of carbon and energy.</title>
        <authorList>
            <person name="Hou S."/>
            <person name="Saw J.H."/>
            <person name="Lee K.S."/>
            <person name="Freitas T.A."/>
            <person name="Belisle C."/>
            <person name="Kawarabayasi Y."/>
            <person name="Donachie S.P."/>
            <person name="Pikina A."/>
            <person name="Galperin M.Y."/>
            <person name="Koonin E.V."/>
            <person name="Makarova K.S."/>
            <person name="Omelchenko M.V."/>
            <person name="Sorokin A."/>
            <person name="Wolf Y.I."/>
            <person name="Li Q.X."/>
            <person name="Keum Y.S."/>
            <person name="Campbell S."/>
            <person name="Denery J."/>
            <person name="Aizawa S."/>
            <person name="Shibata S."/>
            <person name="Malahoff A."/>
            <person name="Alam M."/>
        </authorList>
    </citation>
    <scope>NUCLEOTIDE SEQUENCE [LARGE SCALE GENOMIC DNA]</scope>
    <source>
        <strain>ATCC BAA-735 / DSM 15497 / L2-TR</strain>
    </source>
</reference>
<gene>
    <name evidence="1" type="primary">folD</name>
    <name type="ordered locus">IL1008</name>
</gene>
<dbReference type="EC" id="1.5.1.5" evidence="1"/>
<dbReference type="EC" id="3.5.4.9" evidence="1"/>
<dbReference type="EMBL" id="AE017340">
    <property type="protein sequence ID" value="AAV81848.1"/>
    <property type="molecule type" value="Genomic_DNA"/>
</dbReference>
<dbReference type="RefSeq" id="WP_011234259.1">
    <property type="nucleotide sequence ID" value="NC_006512.1"/>
</dbReference>
<dbReference type="SMR" id="Q5QWH6"/>
<dbReference type="STRING" id="283942.IL1008"/>
<dbReference type="GeneID" id="41336174"/>
<dbReference type="KEGG" id="ilo:IL1008"/>
<dbReference type="eggNOG" id="COG0190">
    <property type="taxonomic scope" value="Bacteria"/>
</dbReference>
<dbReference type="HOGENOM" id="CLU_034045_2_1_6"/>
<dbReference type="OrthoDB" id="9803580at2"/>
<dbReference type="UniPathway" id="UPA00193"/>
<dbReference type="Proteomes" id="UP000001171">
    <property type="component" value="Chromosome"/>
</dbReference>
<dbReference type="GO" id="GO:0005829">
    <property type="term" value="C:cytosol"/>
    <property type="evidence" value="ECO:0007669"/>
    <property type="project" value="TreeGrafter"/>
</dbReference>
<dbReference type="GO" id="GO:0004477">
    <property type="term" value="F:methenyltetrahydrofolate cyclohydrolase activity"/>
    <property type="evidence" value="ECO:0007669"/>
    <property type="project" value="UniProtKB-UniRule"/>
</dbReference>
<dbReference type="GO" id="GO:0004488">
    <property type="term" value="F:methylenetetrahydrofolate dehydrogenase (NADP+) activity"/>
    <property type="evidence" value="ECO:0007669"/>
    <property type="project" value="UniProtKB-UniRule"/>
</dbReference>
<dbReference type="GO" id="GO:0000105">
    <property type="term" value="P:L-histidine biosynthetic process"/>
    <property type="evidence" value="ECO:0007669"/>
    <property type="project" value="UniProtKB-KW"/>
</dbReference>
<dbReference type="GO" id="GO:0009086">
    <property type="term" value="P:methionine biosynthetic process"/>
    <property type="evidence" value="ECO:0007669"/>
    <property type="project" value="UniProtKB-KW"/>
</dbReference>
<dbReference type="GO" id="GO:0006164">
    <property type="term" value="P:purine nucleotide biosynthetic process"/>
    <property type="evidence" value="ECO:0007669"/>
    <property type="project" value="UniProtKB-KW"/>
</dbReference>
<dbReference type="GO" id="GO:0035999">
    <property type="term" value="P:tetrahydrofolate interconversion"/>
    <property type="evidence" value="ECO:0007669"/>
    <property type="project" value="UniProtKB-UniRule"/>
</dbReference>
<dbReference type="CDD" id="cd01080">
    <property type="entry name" value="NAD_bind_m-THF_DH_Cyclohyd"/>
    <property type="match status" value="1"/>
</dbReference>
<dbReference type="FunFam" id="3.40.50.720:FF:000006">
    <property type="entry name" value="Bifunctional protein FolD"/>
    <property type="match status" value="1"/>
</dbReference>
<dbReference type="FunFam" id="3.40.50.10860:FF:000005">
    <property type="entry name" value="C-1-tetrahydrofolate synthase, cytoplasmic, putative"/>
    <property type="match status" value="1"/>
</dbReference>
<dbReference type="Gene3D" id="3.40.50.10860">
    <property type="entry name" value="Leucine Dehydrogenase, chain A, domain 1"/>
    <property type="match status" value="1"/>
</dbReference>
<dbReference type="Gene3D" id="3.40.50.720">
    <property type="entry name" value="NAD(P)-binding Rossmann-like Domain"/>
    <property type="match status" value="1"/>
</dbReference>
<dbReference type="HAMAP" id="MF_01576">
    <property type="entry name" value="THF_DHG_CYH"/>
    <property type="match status" value="1"/>
</dbReference>
<dbReference type="InterPro" id="IPR046346">
    <property type="entry name" value="Aminoacid_DH-like_N_sf"/>
</dbReference>
<dbReference type="InterPro" id="IPR036291">
    <property type="entry name" value="NAD(P)-bd_dom_sf"/>
</dbReference>
<dbReference type="InterPro" id="IPR000672">
    <property type="entry name" value="THF_DH/CycHdrlase"/>
</dbReference>
<dbReference type="InterPro" id="IPR020630">
    <property type="entry name" value="THF_DH/CycHdrlase_cat_dom"/>
</dbReference>
<dbReference type="InterPro" id="IPR020867">
    <property type="entry name" value="THF_DH/CycHdrlase_CS"/>
</dbReference>
<dbReference type="InterPro" id="IPR020631">
    <property type="entry name" value="THF_DH/CycHdrlase_NAD-bd_dom"/>
</dbReference>
<dbReference type="NCBIfam" id="NF008058">
    <property type="entry name" value="PRK10792.1"/>
    <property type="match status" value="1"/>
</dbReference>
<dbReference type="NCBIfam" id="NF010783">
    <property type="entry name" value="PRK14186.1"/>
    <property type="match status" value="1"/>
</dbReference>
<dbReference type="PANTHER" id="PTHR48099:SF5">
    <property type="entry name" value="C-1-TETRAHYDROFOLATE SYNTHASE, CYTOPLASMIC"/>
    <property type="match status" value="1"/>
</dbReference>
<dbReference type="PANTHER" id="PTHR48099">
    <property type="entry name" value="C-1-TETRAHYDROFOLATE SYNTHASE, CYTOPLASMIC-RELATED"/>
    <property type="match status" value="1"/>
</dbReference>
<dbReference type="Pfam" id="PF00763">
    <property type="entry name" value="THF_DHG_CYH"/>
    <property type="match status" value="1"/>
</dbReference>
<dbReference type="Pfam" id="PF02882">
    <property type="entry name" value="THF_DHG_CYH_C"/>
    <property type="match status" value="1"/>
</dbReference>
<dbReference type="PRINTS" id="PR00085">
    <property type="entry name" value="THFDHDRGNASE"/>
</dbReference>
<dbReference type="SUPFAM" id="SSF53223">
    <property type="entry name" value="Aminoacid dehydrogenase-like, N-terminal domain"/>
    <property type="match status" value="1"/>
</dbReference>
<dbReference type="SUPFAM" id="SSF51735">
    <property type="entry name" value="NAD(P)-binding Rossmann-fold domains"/>
    <property type="match status" value="1"/>
</dbReference>
<dbReference type="PROSITE" id="PS00767">
    <property type="entry name" value="THF_DHG_CYH_2"/>
    <property type="match status" value="1"/>
</dbReference>
<organism>
    <name type="scientific">Idiomarina loihiensis (strain ATCC BAA-735 / DSM 15497 / L2-TR)</name>
    <dbReference type="NCBI Taxonomy" id="283942"/>
    <lineage>
        <taxon>Bacteria</taxon>
        <taxon>Pseudomonadati</taxon>
        <taxon>Pseudomonadota</taxon>
        <taxon>Gammaproteobacteria</taxon>
        <taxon>Alteromonadales</taxon>
        <taxon>Idiomarinaceae</taxon>
        <taxon>Idiomarina</taxon>
    </lineage>
</organism>
<feature type="chain" id="PRO_0000268371" description="Bifunctional protein FolD">
    <location>
        <begin position="1"/>
        <end position="286"/>
    </location>
</feature>
<feature type="binding site" evidence="1">
    <location>
        <begin position="166"/>
        <end position="168"/>
    </location>
    <ligand>
        <name>NADP(+)</name>
        <dbReference type="ChEBI" id="CHEBI:58349"/>
    </ligand>
</feature>
<name>FOLD_IDILO</name>
<comment type="function">
    <text evidence="1">Catalyzes the oxidation of 5,10-methylenetetrahydrofolate to 5,10-methenyltetrahydrofolate and then the hydrolysis of 5,10-methenyltetrahydrofolate to 10-formyltetrahydrofolate.</text>
</comment>
<comment type="catalytic activity">
    <reaction evidence="1">
        <text>(6R)-5,10-methylene-5,6,7,8-tetrahydrofolate + NADP(+) = (6R)-5,10-methenyltetrahydrofolate + NADPH</text>
        <dbReference type="Rhea" id="RHEA:22812"/>
        <dbReference type="ChEBI" id="CHEBI:15636"/>
        <dbReference type="ChEBI" id="CHEBI:57455"/>
        <dbReference type="ChEBI" id="CHEBI:57783"/>
        <dbReference type="ChEBI" id="CHEBI:58349"/>
        <dbReference type="EC" id="1.5.1.5"/>
    </reaction>
</comment>
<comment type="catalytic activity">
    <reaction evidence="1">
        <text>(6R)-5,10-methenyltetrahydrofolate + H2O = (6R)-10-formyltetrahydrofolate + H(+)</text>
        <dbReference type="Rhea" id="RHEA:23700"/>
        <dbReference type="ChEBI" id="CHEBI:15377"/>
        <dbReference type="ChEBI" id="CHEBI:15378"/>
        <dbReference type="ChEBI" id="CHEBI:57455"/>
        <dbReference type="ChEBI" id="CHEBI:195366"/>
        <dbReference type="EC" id="3.5.4.9"/>
    </reaction>
</comment>
<comment type="pathway">
    <text evidence="1">One-carbon metabolism; tetrahydrofolate interconversion.</text>
</comment>
<comment type="subunit">
    <text evidence="1">Homodimer.</text>
</comment>
<comment type="similarity">
    <text evidence="1">Belongs to the tetrahydrofolate dehydrogenase/cyclohydrolase family.</text>
</comment>
<evidence type="ECO:0000255" key="1">
    <source>
        <dbReference type="HAMAP-Rule" id="MF_01576"/>
    </source>
</evidence>